<proteinExistence type="evidence at protein level"/>
<organism>
    <name type="scientific">Oryza sativa subsp. indica</name>
    <name type="common">Rice</name>
    <dbReference type="NCBI Taxonomy" id="39946"/>
    <lineage>
        <taxon>Eukaryota</taxon>
        <taxon>Viridiplantae</taxon>
        <taxon>Streptophyta</taxon>
        <taxon>Embryophyta</taxon>
        <taxon>Tracheophyta</taxon>
        <taxon>Spermatophyta</taxon>
        <taxon>Magnoliopsida</taxon>
        <taxon>Liliopsida</taxon>
        <taxon>Poales</taxon>
        <taxon>Poaceae</taxon>
        <taxon>BOP clade</taxon>
        <taxon>Oryzoideae</taxon>
        <taxon>Oryzeae</taxon>
        <taxon>Oryzinae</taxon>
        <taxon>Oryza</taxon>
        <taxon>Oryza sativa</taxon>
    </lineage>
</organism>
<evidence type="ECO:0000255" key="1">
    <source>
        <dbReference type="HAMAP-Rule" id="MF_03165"/>
    </source>
</evidence>
<evidence type="ECO:0000256" key="2">
    <source>
        <dbReference type="SAM" id="MobiDB-lite"/>
    </source>
</evidence>
<evidence type="ECO:0000269" key="3">
    <source>
    </source>
</evidence>
<evidence type="ECO:0000305" key="4"/>
<keyword id="KW-0067">ATP-binding</keyword>
<keyword id="KW-0238">DNA-binding</keyword>
<keyword id="KW-0413">Isomerase</keyword>
<keyword id="KW-0547">Nucleotide-binding</keyword>
<keyword id="KW-0539">Nucleus</keyword>
<keyword id="KW-1185">Reference proteome</keyword>
<keyword id="KW-0799">Topoisomerase</keyword>
<reference key="1">
    <citation type="journal article" date="2006" name="FEBS J.">
        <title>Overexpression of putative topoisomerase 6 genes from rice confers stress tolerance in transgenic Arabidopsis plants.</title>
        <authorList>
            <person name="Jain M."/>
            <person name="Tyagi A.K."/>
            <person name="Khurana J.P."/>
        </authorList>
    </citation>
    <scope>NUCLEOTIDE SEQUENCE [MRNA]</scope>
    <scope>SUBCELLULAR LOCATION</scope>
    <scope>TISSUE SPECIFICITY</scope>
    <scope>INDUCTION</scope>
    <scope>INTERACTION WITH SPO11-2 AND TOP6A3</scope>
    <source>
        <strain>cv. Pusa Basmati</strain>
    </source>
</reference>
<reference key="2">
    <citation type="journal article" date="2005" name="PLoS Biol.">
        <title>The genomes of Oryza sativa: a history of duplications.</title>
        <authorList>
            <person name="Yu J."/>
            <person name="Wang J."/>
            <person name="Lin W."/>
            <person name="Li S."/>
            <person name="Li H."/>
            <person name="Zhou J."/>
            <person name="Ni P."/>
            <person name="Dong W."/>
            <person name="Hu S."/>
            <person name="Zeng C."/>
            <person name="Zhang J."/>
            <person name="Zhang Y."/>
            <person name="Li R."/>
            <person name="Xu Z."/>
            <person name="Li S."/>
            <person name="Li X."/>
            <person name="Zheng H."/>
            <person name="Cong L."/>
            <person name="Lin L."/>
            <person name="Yin J."/>
            <person name="Geng J."/>
            <person name="Li G."/>
            <person name="Shi J."/>
            <person name="Liu J."/>
            <person name="Lv H."/>
            <person name="Li J."/>
            <person name="Wang J."/>
            <person name="Deng Y."/>
            <person name="Ran L."/>
            <person name="Shi X."/>
            <person name="Wang X."/>
            <person name="Wu Q."/>
            <person name="Li C."/>
            <person name="Ren X."/>
            <person name="Wang J."/>
            <person name="Wang X."/>
            <person name="Li D."/>
            <person name="Liu D."/>
            <person name="Zhang X."/>
            <person name="Ji Z."/>
            <person name="Zhao W."/>
            <person name="Sun Y."/>
            <person name="Zhang Z."/>
            <person name="Bao J."/>
            <person name="Han Y."/>
            <person name="Dong L."/>
            <person name="Ji J."/>
            <person name="Chen P."/>
            <person name="Wu S."/>
            <person name="Liu J."/>
            <person name="Xiao Y."/>
            <person name="Bu D."/>
            <person name="Tan J."/>
            <person name="Yang L."/>
            <person name="Ye C."/>
            <person name="Zhang J."/>
            <person name="Xu J."/>
            <person name="Zhou Y."/>
            <person name="Yu Y."/>
            <person name="Zhang B."/>
            <person name="Zhuang S."/>
            <person name="Wei H."/>
            <person name="Liu B."/>
            <person name="Lei M."/>
            <person name="Yu H."/>
            <person name="Li Y."/>
            <person name="Xu H."/>
            <person name="Wei S."/>
            <person name="He X."/>
            <person name="Fang L."/>
            <person name="Zhang Z."/>
            <person name="Zhang Y."/>
            <person name="Huang X."/>
            <person name="Su Z."/>
            <person name="Tong W."/>
            <person name="Li J."/>
            <person name="Tong Z."/>
            <person name="Li S."/>
            <person name="Ye J."/>
            <person name="Wang L."/>
            <person name="Fang L."/>
            <person name="Lei T."/>
            <person name="Chen C.-S."/>
            <person name="Chen H.-C."/>
            <person name="Xu Z."/>
            <person name="Li H."/>
            <person name="Huang H."/>
            <person name="Zhang F."/>
            <person name="Xu H."/>
            <person name="Li N."/>
            <person name="Zhao C."/>
            <person name="Li S."/>
            <person name="Dong L."/>
            <person name="Huang Y."/>
            <person name="Li L."/>
            <person name="Xi Y."/>
            <person name="Qi Q."/>
            <person name="Li W."/>
            <person name="Zhang B."/>
            <person name="Hu W."/>
            <person name="Zhang Y."/>
            <person name="Tian X."/>
            <person name="Jiao Y."/>
            <person name="Liang X."/>
            <person name="Jin J."/>
            <person name="Gao L."/>
            <person name="Zheng W."/>
            <person name="Hao B."/>
            <person name="Liu S.-M."/>
            <person name="Wang W."/>
            <person name="Yuan L."/>
            <person name="Cao M."/>
            <person name="McDermott J."/>
            <person name="Samudrala R."/>
            <person name="Wang J."/>
            <person name="Wong G.K.-S."/>
            <person name="Yang H."/>
        </authorList>
    </citation>
    <scope>NUCLEOTIDE SEQUENCE [LARGE SCALE GENOMIC DNA]</scope>
    <source>
        <strain>cv. 93-11</strain>
    </source>
</reference>
<protein>
    <recommendedName>
        <fullName evidence="1">DNA topoisomerase 6 subunit B</fullName>
        <shortName>OsTOP6B</shortName>
        <ecNumber evidence="1">5.6.2.2</ecNumber>
    </recommendedName>
</protein>
<name>TOP6B_ORYSI</name>
<feature type="chain" id="PRO_0000421935" description="DNA topoisomerase 6 subunit B">
    <location>
        <begin position="1"/>
        <end position="696"/>
    </location>
</feature>
<feature type="region of interest" description="Disordered" evidence="2">
    <location>
        <begin position="1"/>
        <end position="36"/>
    </location>
</feature>
<feature type="compositionally biased region" description="Low complexity" evidence="2">
    <location>
        <begin position="20"/>
        <end position="36"/>
    </location>
</feature>
<feature type="binding site" evidence="1">
    <location>
        <position position="88"/>
    </location>
    <ligand>
        <name>ATP</name>
        <dbReference type="ChEBI" id="CHEBI:30616"/>
    </ligand>
</feature>
<feature type="binding site" evidence="1">
    <location>
        <position position="187"/>
    </location>
    <ligand>
        <name>ATP</name>
        <dbReference type="ChEBI" id="CHEBI:30616"/>
    </ligand>
</feature>
<feature type="binding site" evidence="1">
    <location>
        <begin position="208"/>
        <end position="209"/>
    </location>
    <ligand>
        <name>ATP</name>
        <dbReference type="ChEBI" id="CHEBI:30616"/>
    </ligand>
</feature>
<feature type="binding site" evidence="1">
    <location>
        <begin position="217"/>
        <end position="224"/>
    </location>
    <ligand>
        <name>ATP</name>
        <dbReference type="ChEBI" id="CHEBI:30616"/>
    </ligand>
</feature>
<feature type="binding site" evidence="1">
    <location>
        <position position="543"/>
    </location>
    <ligand>
        <name>ATP</name>
        <dbReference type="ChEBI" id="CHEBI:30616"/>
    </ligand>
</feature>
<feature type="sequence conflict" description="In Ref. 1; CAE47077." evidence="4" ref="1">
    <original>R</original>
    <variation>G</variation>
    <location>
        <position position="182"/>
    </location>
</feature>
<feature type="sequence conflict" description="In Ref. 1; CAE47077." evidence="4" ref="1">
    <original>R</original>
    <variation>H</variation>
    <location>
        <position position="616"/>
    </location>
</feature>
<dbReference type="EC" id="5.6.2.2" evidence="1"/>
<dbReference type="EMBL" id="AJ582989">
    <property type="protein sequence ID" value="CAE47077.1"/>
    <property type="molecule type" value="mRNA"/>
</dbReference>
<dbReference type="EMBL" id="CM000134">
    <property type="protein sequence ID" value="EEC84242.1"/>
    <property type="molecule type" value="Genomic_DNA"/>
</dbReference>
<dbReference type="SMR" id="B8BDQ4"/>
<dbReference type="STRING" id="39946.B8BDQ4"/>
<dbReference type="EnsemblPlants" id="BGIOSGA030424-TA">
    <property type="protein sequence ID" value="BGIOSGA030424-PA"/>
    <property type="gene ID" value="BGIOSGA030424"/>
</dbReference>
<dbReference type="EnsemblPlants" id="OsKYG_09g0003810.01">
    <property type="protein sequence ID" value="OsKYG_09g0003810.01"/>
    <property type="gene ID" value="OsKYG_09g0003810"/>
</dbReference>
<dbReference type="Gramene" id="BGIOSGA030424-TA">
    <property type="protein sequence ID" value="BGIOSGA030424-PA"/>
    <property type="gene ID" value="BGIOSGA030424"/>
</dbReference>
<dbReference type="Gramene" id="OsKYG_09g0003810.01">
    <property type="protein sequence ID" value="OsKYG_09g0003810.01"/>
    <property type="gene ID" value="OsKYG_09g0003810"/>
</dbReference>
<dbReference type="HOGENOM" id="CLU_006403_1_0_1"/>
<dbReference type="OMA" id="VYRGNPF"/>
<dbReference type="Proteomes" id="UP000007015">
    <property type="component" value="Chromosome 9"/>
</dbReference>
<dbReference type="GO" id="GO:0009330">
    <property type="term" value="C:DNA topoisomerase type II (double strand cut, ATP-hydrolyzing) complex"/>
    <property type="evidence" value="ECO:0007669"/>
    <property type="project" value="UniProtKB-UniRule"/>
</dbReference>
<dbReference type="GO" id="GO:0005634">
    <property type="term" value="C:nucleus"/>
    <property type="evidence" value="ECO:0007669"/>
    <property type="project" value="UniProtKB-SubCell"/>
</dbReference>
<dbReference type="GO" id="GO:0005524">
    <property type="term" value="F:ATP binding"/>
    <property type="evidence" value="ECO:0007669"/>
    <property type="project" value="UniProtKB-UniRule"/>
</dbReference>
<dbReference type="GO" id="GO:0003677">
    <property type="term" value="F:DNA binding"/>
    <property type="evidence" value="ECO:0007669"/>
    <property type="project" value="UniProtKB-UniRule"/>
</dbReference>
<dbReference type="GO" id="GO:0003918">
    <property type="term" value="F:DNA topoisomerase type II (double strand cut, ATP-hydrolyzing) activity"/>
    <property type="evidence" value="ECO:0007669"/>
    <property type="project" value="UniProtKB-UniRule"/>
</dbReference>
<dbReference type="GO" id="GO:0042802">
    <property type="term" value="F:identical protein binding"/>
    <property type="evidence" value="ECO:0007669"/>
    <property type="project" value="EnsemblPlants"/>
</dbReference>
<dbReference type="GO" id="GO:0000902">
    <property type="term" value="P:cell morphogenesis"/>
    <property type="evidence" value="ECO:0007669"/>
    <property type="project" value="EnsemblPlants"/>
</dbReference>
<dbReference type="GO" id="GO:0042023">
    <property type="term" value="P:DNA endoreduplication"/>
    <property type="evidence" value="ECO:0007669"/>
    <property type="project" value="EnsemblPlants"/>
</dbReference>
<dbReference type="GO" id="GO:0006265">
    <property type="term" value="P:DNA topological change"/>
    <property type="evidence" value="ECO:0007669"/>
    <property type="project" value="UniProtKB-UniRule"/>
</dbReference>
<dbReference type="GO" id="GO:0007389">
    <property type="term" value="P:pattern specification process"/>
    <property type="evidence" value="ECO:0007669"/>
    <property type="project" value="EnsemblPlants"/>
</dbReference>
<dbReference type="GO" id="GO:0009741">
    <property type="term" value="P:response to brassinosteroid"/>
    <property type="evidence" value="ECO:0007669"/>
    <property type="project" value="EnsemblPlants"/>
</dbReference>
<dbReference type="GO" id="GO:0010026">
    <property type="term" value="P:trichome differentiation"/>
    <property type="evidence" value="ECO:0007669"/>
    <property type="project" value="EnsemblPlants"/>
</dbReference>
<dbReference type="CDD" id="cd00823">
    <property type="entry name" value="TopoIIB_Trans"/>
    <property type="match status" value="1"/>
</dbReference>
<dbReference type="FunFam" id="1.10.8.50:FF:000006">
    <property type="entry name" value="DNA topoisomerase 6 subunit B"/>
    <property type="match status" value="1"/>
</dbReference>
<dbReference type="FunFam" id="3.30.230.10:FF:000050">
    <property type="entry name" value="DNA topoisomerase 6 subunit B"/>
    <property type="match status" value="1"/>
</dbReference>
<dbReference type="Gene3D" id="1.10.8.50">
    <property type="match status" value="1"/>
</dbReference>
<dbReference type="Gene3D" id="3.30.230.10">
    <property type="match status" value="1"/>
</dbReference>
<dbReference type="Gene3D" id="3.30.565.10">
    <property type="entry name" value="Histidine kinase-like ATPase, C-terminal domain"/>
    <property type="match status" value="1"/>
</dbReference>
<dbReference type="HAMAP" id="MF_00322">
    <property type="entry name" value="Top6B"/>
    <property type="match status" value="1"/>
</dbReference>
<dbReference type="InterPro" id="IPR036890">
    <property type="entry name" value="HATPase_C_sf"/>
</dbReference>
<dbReference type="InterPro" id="IPR020568">
    <property type="entry name" value="Ribosomal_Su5_D2-typ_SF"/>
</dbReference>
<dbReference type="InterPro" id="IPR014721">
    <property type="entry name" value="Ribsml_uS5_D2-typ_fold_subgr"/>
</dbReference>
<dbReference type="InterPro" id="IPR005734">
    <property type="entry name" value="TopoVI_B"/>
</dbReference>
<dbReference type="InterPro" id="IPR015320">
    <property type="entry name" value="TopoVI_B_transducer"/>
</dbReference>
<dbReference type="NCBIfam" id="NF003218">
    <property type="entry name" value="PRK04184.1"/>
    <property type="match status" value="1"/>
</dbReference>
<dbReference type="PANTHER" id="PTHR48444">
    <property type="entry name" value="DNA TOPOISOMERASE 6 SUBUNIT B"/>
    <property type="match status" value="1"/>
</dbReference>
<dbReference type="PANTHER" id="PTHR48444:SF1">
    <property type="entry name" value="DNA TOPOISOMERASE 6 SUBUNIT B"/>
    <property type="match status" value="1"/>
</dbReference>
<dbReference type="Pfam" id="PF13589">
    <property type="entry name" value="HATPase_c_3"/>
    <property type="match status" value="1"/>
</dbReference>
<dbReference type="Pfam" id="PF09239">
    <property type="entry name" value="Topo-VIb_trans"/>
    <property type="match status" value="1"/>
</dbReference>
<dbReference type="SUPFAM" id="SSF55874">
    <property type="entry name" value="ATPase domain of HSP90 chaperone/DNA topoisomerase II/histidine kinase"/>
    <property type="match status" value="1"/>
</dbReference>
<dbReference type="SUPFAM" id="SSF54211">
    <property type="entry name" value="Ribosomal protein S5 domain 2-like"/>
    <property type="match status" value="1"/>
</dbReference>
<gene>
    <name evidence="1" type="primary">TOP6B</name>
    <name type="ORF">OsI_30680</name>
</gene>
<sequence length="696" mass="78058">MDDDAGDGAASGGTKRKVTAASSSAAAKGKAAGKGKAASKASALATAKESSLLKQKSPAEFFAENKNIAGFDNPGKSLYTTMRELVENALDSAESISELPDIEIIIEEITKSKFNTMIGLVDRQRIDEELYDDFESAKAREKRLAKEARFQETQAKNAALGKKVKEAPAARGKGRGEAAFFRVTCKDNGRGMPHDDIPNMLGRVLSGTKYGLRQTRGKFGLGAKMALIWSKMSTGLPIEIKSSMKGQNFISFCRLDIDIHKNVPHVHLHEKRENKDRWHGAELQVIIEGNWTTHRSKILHYMRQMAVITPYAQFLFRFLSDSPDKNLTIQFARRTDVMPPIPLQTKHHPSAVDLLLIKRLISETTKQNLLQFLQHEFVNISKSHAERLIGEMGPDFSAKTTVKSLTSQQLVRIHQLFRQAKFDDPSGNCLSPAGEYNLRLGIIKELHPDLVATHASSPQVFEGHPFIVEAGISIGGKDVKHGLNIFRYANRIPLLFEQGADVITRTALKRINWSSYKINQQQDKIGVFVSIVSTKIPFKGTGKEYIGDDITEIASAVQSALKQCCLQLKSKIVKKLQARERQDRKRNLNRYIPDVARAIMETLGEIADESPPKRPRYDKEDEELLEKVNSEEVTEMTFRDCLTQHVEQVDYEMALEYAMQSGVSEEPREALYLNSLEGSYKFIDFQSPVFVFRFIP</sequence>
<comment type="function">
    <text evidence="1">Component of the DNA topoisomerase VI involved in chromatin organization and progression of endoreduplication cycles. Relaxes both positive and negative superturns and exhibits a strong decatenase activity. The B subunit binds ATP (By similarity). May be involved in cell proliferation and stress tolerance.</text>
</comment>
<comment type="catalytic activity">
    <reaction evidence="1">
        <text>ATP-dependent breakage, passage and rejoining of double-stranded DNA.</text>
        <dbReference type="EC" id="5.6.2.2"/>
    </reaction>
</comment>
<comment type="subunit">
    <text evidence="1 3">Homodimer. Heterotetramer of two TOP6A and two TOP6B subunits (By similarity). Interacts with SPO11-2 and TOP6A3.</text>
</comment>
<comment type="subcellular location">
    <subcellularLocation>
        <location evidence="1 3">Nucleus</location>
    </subcellularLocation>
</comment>
<comment type="tissue specificity">
    <text evidence="3">Highly expressed in flowers before pollination. Expressed in roots and shoots.</text>
</comment>
<comment type="induction">
    <text evidence="3">By auxin, abscisic acid (ABA) and benzylaminopurine.</text>
</comment>
<comment type="similarity">
    <text evidence="1">Belongs to the TOP6B family.</text>
</comment>
<accession>B8BDQ4</accession>
<accession>Q5ZPR4</accession>